<sequence length="349" mass="38715">MPRLHSASEPPATGFFARVRNELGNRTEGLHQINNQALDWYRSQSQIRQILIQIGGVVAIVIGVLVLIFHKYLIELLVIISDDWAKLPGGRLILFLLVFFVGFPPLIGYSALSLLAGMVYGFPYGWPLLASASVSGSFVAFLVFRYFLRSQGERLVNSNEKFRAFAEILREDSSLFLLVLIRLCPLPYSLSNGALAAIPELSAWVYLGASVITSPKMLIHLFVGHKIKEFGDAKTDTSTKIIDVISILVTGAAASLTTFIIYRKMQQKLHHNRAGANYDAFVFGNFDDLESGTNVELNSADFDQDNFIITDDELEEEEPNGSHTATATQVQVARRNCSKAMTICTLMFV</sequence>
<gene>
    <name type="primary">TVP38</name>
    <name type="ORF">PGUG_02638</name>
</gene>
<name>TVP38_PICGU</name>
<accession>A5DH87</accession>
<evidence type="ECO:0000250" key="1">
    <source>
        <dbReference type="UniProtKB" id="P36164"/>
    </source>
</evidence>
<evidence type="ECO:0000255" key="2"/>
<evidence type="ECO:0000305" key="3"/>
<proteinExistence type="inferred from homology"/>
<protein>
    <recommendedName>
        <fullName>Golgi apparatus membrane protein TVP38</fullName>
    </recommendedName>
</protein>
<reference key="1">
    <citation type="journal article" date="2009" name="Nature">
        <title>Evolution of pathogenicity and sexual reproduction in eight Candida genomes.</title>
        <authorList>
            <person name="Butler G."/>
            <person name="Rasmussen M.D."/>
            <person name="Lin M.F."/>
            <person name="Santos M.A.S."/>
            <person name="Sakthikumar S."/>
            <person name="Munro C.A."/>
            <person name="Rheinbay E."/>
            <person name="Grabherr M."/>
            <person name="Forche A."/>
            <person name="Reedy J.L."/>
            <person name="Agrafioti I."/>
            <person name="Arnaud M.B."/>
            <person name="Bates S."/>
            <person name="Brown A.J.P."/>
            <person name="Brunke S."/>
            <person name="Costanzo M.C."/>
            <person name="Fitzpatrick D.A."/>
            <person name="de Groot P.W.J."/>
            <person name="Harris D."/>
            <person name="Hoyer L.L."/>
            <person name="Hube B."/>
            <person name="Klis F.M."/>
            <person name="Kodira C."/>
            <person name="Lennard N."/>
            <person name="Logue M.E."/>
            <person name="Martin R."/>
            <person name="Neiman A.M."/>
            <person name="Nikolaou E."/>
            <person name="Quail M.A."/>
            <person name="Quinn J."/>
            <person name="Santos M.C."/>
            <person name="Schmitzberger F.F."/>
            <person name="Sherlock G."/>
            <person name="Shah P."/>
            <person name="Silverstein K.A.T."/>
            <person name="Skrzypek M.S."/>
            <person name="Soll D."/>
            <person name="Staggs R."/>
            <person name="Stansfield I."/>
            <person name="Stumpf M.P.H."/>
            <person name="Sudbery P.E."/>
            <person name="Srikantha T."/>
            <person name="Zeng Q."/>
            <person name="Berman J."/>
            <person name="Berriman M."/>
            <person name="Heitman J."/>
            <person name="Gow N.A.R."/>
            <person name="Lorenz M.C."/>
            <person name="Birren B.W."/>
            <person name="Kellis M."/>
            <person name="Cuomo C.A."/>
        </authorList>
    </citation>
    <scope>NUCLEOTIDE SEQUENCE [LARGE SCALE GENOMIC DNA]</scope>
    <source>
        <strain>ATCC 6260 / CBS 566 / DSM 6381 / JCM 1539 / NBRC 10279 / NRRL Y-324</strain>
    </source>
</reference>
<keyword id="KW-0325">Glycoprotein</keyword>
<keyword id="KW-0333">Golgi apparatus</keyword>
<keyword id="KW-0472">Membrane</keyword>
<keyword id="KW-1185">Reference proteome</keyword>
<keyword id="KW-0812">Transmembrane</keyword>
<keyword id="KW-1133">Transmembrane helix</keyword>
<comment type="function">
    <text>Golgi membrane protein involved in vesicular trafficking and spindle migration.</text>
</comment>
<comment type="subcellular location">
    <subcellularLocation>
        <location>Golgi apparatus membrane</location>
        <topology>Multi-pass membrane protein</topology>
    </subcellularLocation>
</comment>
<comment type="domain">
    <text evidence="1">The VTT domain was previously called the SNARE-assoc domain. As there is no evidence that this domain associates with SNARE proteins, it was renamed as VMP1, TMEM41, and TVP38 (VTT) domain.</text>
</comment>
<comment type="similarity">
    <text evidence="3">Belongs to the TVP38/TMEM64 family.</text>
</comment>
<organism>
    <name type="scientific">Meyerozyma guilliermondii (strain ATCC 6260 / CBS 566 / DSM 6381 / JCM 1539 / NBRC 10279 / NRRL Y-324)</name>
    <name type="common">Yeast</name>
    <name type="synonym">Candida guilliermondii</name>
    <dbReference type="NCBI Taxonomy" id="294746"/>
    <lineage>
        <taxon>Eukaryota</taxon>
        <taxon>Fungi</taxon>
        <taxon>Dikarya</taxon>
        <taxon>Ascomycota</taxon>
        <taxon>Saccharomycotina</taxon>
        <taxon>Pichiomycetes</taxon>
        <taxon>Debaryomycetaceae</taxon>
        <taxon>Meyerozyma</taxon>
    </lineage>
</organism>
<dbReference type="EMBL" id="CH408157">
    <property type="protein sequence ID" value="EDK38540.2"/>
    <property type="molecule type" value="Genomic_DNA"/>
</dbReference>
<dbReference type="RefSeq" id="XP_001484909.1">
    <property type="nucleotide sequence ID" value="XM_001484859.1"/>
</dbReference>
<dbReference type="FunCoup" id="A5DH87">
    <property type="interactions" value="115"/>
</dbReference>
<dbReference type="STRING" id="294746.A5DH87"/>
<dbReference type="GlyCosmos" id="A5DH87">
    <property type="glycosylation" value="1 site, No reported glycans"/>
</dbReference>
<dbReference type="GeneID" id="5126612"/>
<dbReference type="KEGG" id="pgu:PGUG_02638"/>
<dbReference type="VEuPathDB" id="FungiDB:PGUG_02638"/>
<dbReference type="eggNOG" id="KOG3140">
    <property type="taxonomic scope" value="Eukaryota"/>
</dbReference>
<dbReference type="HOGENOM" id="CLU_041954_1_0_1"/>
<dbReference type="InParanoid" id="A5DH87"/>
<dbReference type="OMA" id="KWQALET"/>
<dbReference type="OrthoDB" id="166803at2759"/>
<dbReference type="Proteomes" id="UP000001997">
    <property type="component" value="Unassembled WGS sequence"/>
</dbReference>
<dbReference type="GO" id="GO:0000139">
    <property type="term" value="C:Golgi membrane"/>
    <property type="evidence" value="ECO:0007669"/>
    <property type="project" value="UniProtKB-SubCell"/>
</dbReference>
<dbReference type="GO" id="GO:0000022">
    <property type="term" value="P:mitotic spindle elongation"/>
    <property type="evidence" value="ECO:0007669"/>
    <property type="project" value="TreeGrafter"/>
</dbReference>
<dbReference type="GO" id="GO:0016192">
    <property type="term" value="P:vesicle-mediated transport"/>
    <property type="evidence" value="ECO:0007669"/>
    <property type="project" value="TreeGrafter"/>
</dbReference>
<dbReference type="InterPro" id="IPR051076">
    <property type="entry name" value="Golgi_membrane_TVP38/TMEM64"/>
</dbReference>
<dbReference type="InterPro" id="IPR032816">
    <property type="entry name" value="VTT_dom"/>
</dbReference>
<dbReference type="PANTHER" id="PTHR47549:SF1">
    <property type="entry name" value="GOLGI APPARATUS MEMBRANE PROTEIN TVP38"/>
    <property type="match status" value="1"/>
</dbReference>
<dbReference type="PANTHER" id="PTHR47549">
    <property type="entry name" value="GOLGI APPARATUS MEMBRANE PROTEIN TVP38-RELATED"/>
    <property type="match status" value="1"/>
</dbReference>
<dbReference type="Pfam" id="PF09335">
    <property type="entry name" value="VTT_dom"/>
    <property type="match status" value="1"/>
</dbReference>
<feature type="chain" id="PRO_0000343072" description="Golgi apparatus membrane protein TVP38">
    <location>
        <begin position="1"/>
        <end position="349"/>
    </location>
</feature>
<feature type="topological domain" description="Lumenal" evidence="2">
    <location>
        <begin position="1"/>
        <end position="49"/>
    </location>
</feature>
<feature type="transmembrane region" description="Helical" evidence="2">
    <location>
        <begin position="50"/>
        <end position="70"/>
    </location>
</feature>
<feature type="topological domain" description="Cytoplasmic" evidence="2">
    <location>
        <begin position="71"/>
        <end position="91"/>
    </location>
</feature>
<feature type="transmembrane region" description="Helical" evidence="2">
    <location>
        <begin position="92"/>
        <end position="112"/>
    </location>
</feature>
<feature type="topological domain" description="Lumenal" evidence="2">
    <location>
        <begin position="113"/>
        <end position="123"/>
    </location>
</feature>
<feature type="transmembrane region" description="Helical" evidence="2">
    <location>
        <begin position="124"/>
        <end position="144"/>
    </location>
</feature>
<feature type="topological domain" description="Cytoplasmic" evidence="2">
    <location>
        <begin position="145"/>
        <end position="192"/>
    </location>
</feature>
<feature type="transmembrane region" description="Helical" evidence="2">
    <location>
        <begin position="193"/>
        <end position="213"/>
    </location>
</feature>
<feature type="topological domain" description="Lumenal" evidence="2">
    <location>
        <begin position="214"/>
        <end position="240"/>
    </location>
</feature>
<feature type="transmembrane region" description="Helical" evidence="2">
    <location>
        <begin position="241"/>
        <end position="261"/>
    </location>
</feature>
<feature type="topological domain" description="Cytoplasmic" evidence="2">
    <location>
        <begin position="262"/>
        <end position="349"/>
    </location>
</feature>
<feature type="region of interest" description="VTT domain" evidence="1">
    <location>
        <begin position="117"/>
        <end position="227"/>
    </location>
</feature>
<feature type="glycosylation site" description="N-linked (GlcNAc...) asparagine" evidence="2">
    <location>
        <position position="25"/>
    </location>
</feature>